<evidence type="ECO:0000305" key="1"/>
<dbReference type="EMBL" id="X13691">
    <property type="protein sequence ID" value="CAA31980.1"/>
    <property type="molecule type" value="Genomic_DNA"/>
</dbReference>
<dbReference type="EMBL" id="AH010242">
    <property type="protein sequence ID" value="AAG60740.1"/>
    <property type="molecule type" value="Genomic_DNA"/>
</dbReference>
<dbReference type="EMBL" id="BA000040">
    <property type="protein sequence ID" value="BAC47020.1"/>
    <property type="molecule type" value="Genomic_DNA"/>
</dbReference>
<dbReference type="PIR" id="S04873">
    <property type="entry name" value="S04873"/>
</dbReference>
<dbReference type="RefSeq" id="NP_768395.1">
    <property type="nucleotide sequence ID" value="NC_004463.1"/>
</dbReference>
<dbReference type="RefSeq" id="WP_011084564.1">
    <property type="nucleotide sequence ID" value="NZ_CP011360.1"/>
</dbReference>
<dbReference type="SMR" id="P37029"/>
<dbReference type="STRING" id="224911.AAV28_05700"/>
<dbReference type="EnsemblBacteria" id="BAC47020">
    <property type="protein sequence ID" value="BAC47020"/>
    <property type="gene ID" value="BAC47020"/>
</dbReference>
<dbReference type="KEGG" id="bja:blr1755"/>
<dbReference type="PATRIC" id="fig|224911.44.peg.1220"/>
<dbReference type="eggNOG" id="COG0316">
    <property type="taxonomic scope" value="Bacteria"/>
</dbReference>
<dbReference type="HOGENOM" id="CLU_069054_5_2_5"/>
<dbReference type="InParanoid" id="P37029"/>
<dbReference type="OrthoDB" id="9801228at2"/>
<dbReference type="PhylomeDB" id="P37029"/>
<dbReference type="Proteomes" id="UP000002526">
    <property type="component" value="Chromosome"/>
</dbReference>
<dbReference type="GO" id="GO:0005737">
    <property type="term" value="C:cytoplasm"/>
    <property type="evidence" value="ECO:0000318"/>
    <property type="project" value="GO_Central"/>
</dbReference>
<dbReference type="GO" id="GO:0005829">
    <property type="term" value="C:cytosol"/>
    <property type="evidence" value="ECO:0000318"/>
    <property type="project" value="GO_Central"/>
</dbReference>
<dbReference type="GO" id="GO:0051537">
    <property type="term" value="F:2 iron, 2 sulfur cluster binding"/>
    <property type="evidence" value="ECO:0000318"/>
    <property type="project" value="GO_Central"/>
</dbReference>
<dbReference type="GO" id="GO:0016226">
    <property type="term" value="P:iron-sulfur cluster assembly"/>
    <property type="evidence" value="ECO:0000318"/>
    <property type="project" value="GO_Central"/>
</dbReference>
<dbReference type="Gene3D" id="2.60.300.12">
    <property type="entry name" value="HesB-like domain"/>
    <property type="match status" value="1"/>
</dbReference>
<dbReference type="InterPro" id="IPR050322">
    <property type="entry name" value="Fe-S_cluster_asmbl/transfer"/>
</dbReference>
<dbReference type="InterPro" id="IPR000361">
    <property type="entry name" value="FeS_biogenesis"/>
</dbReference>
<dbReference type="InterPro" id="IPR016092">
    <property type="entry name" value="FeS_cluster_insertion"/>
</dbReference>
<dbReference type="InterPro" id="IPR017870">
    <property type="entry name" value="FeS_cluster_insertion_CS"/>
</dbReference>
<dbReference type="InterPro" id="IPR035903">
    <property type="entry name" value="HesB-like_dom_sf"/>
</dbReference>
<dbReference type="NCBIfam" id="TIGR00049">
    <property type="entry name" value="iron-sulfur cluster assembly accessory protein"/>
    <property type="match status" value="1"/>
</dbReference>
<dbReference type="PANTHER" id="PTHR10072:SF41">
    <property type="entry name" value="IRON-SULFUR CLUSTER ASSEMBLY 1 HOMOLOG, MITOCHONDRIAL"/>
    <property type="match status" value="1"/>
</dbReference>
<dbReference type="PANTHER" id="PTHR10072">
    <property type="entry name" value="IRON-SULFUR CLUSTER ASSEMBLY PROTEIN"/>
    <property type="match status" value="1"/>
</dbReference>
<dbReference type="Pfam" id="PF01521">
    <property type="entry name" value="Fe-S_biosyn"/>
    <property type="match status" value="1"/>
</dbReference>
<dbReference type="SUPFAM" id="SSF89360">
    <property type="entry name" value="HesB-like domain"/>
    <property type="match status" value="1"/>
</dbReference>
<dbReference type="PROSITE" id="PS01152">
    <property type="entry name" value="HESB"/>
    <property type="match status" value="1"/>
</dbReference>
<reference key="1">
    <citation type="submission" date="1988-12" db="EMBL/GenBank/DDBJ databases">
        <authorList>
            <person name="Ebeling S."/>
        </authorList>
    </citation>
    <scope>NUCLEOTIDE SEQUENCE [GENOMIC DNA]</scope>
    <source>
        <strain>USDA 110spc4</strain>
    </source>
</reference>
<reference key="2">
    <citation type="journal article" date="2001" name="J. Bacteriol.">
        <title>Potential symbiosis-specific genes uncovered by sequencing a 410-kb DNA region of the Bradyrhizobium japonicum chromosome.</title>
        <authorList>
            <person name="Goettfert M."/>
            <person name="Roethlisberger S."/>
            <person name="Kuendig C."/>
            <person name="Beck C."/>
            <person name="Marty R."/>
            <person name="Hennecke H."/>
        </authorList>
    </citation>
    <scope>NUCLEOTIDE SEQUENCE [GENOMIC DNA]</scope>
    <source>
        <strain>USDA 110spc4</strain>
    </source>
</reference>
<reference key="3">
    <citation type="journal article" date="2002" name="DNA Res.">
        <title>Complete genomic sequence of nitrogen-fixing symbiotic bacterium Bradyrhizobium japonicum USDA110.</title>
        <authorList>
            <person name="Kaneko T."/>
            <person name="Nakamura Y."/>
            <person name="Sato S."/>
            <person name="Minamisawa K."/>
            <person name="Uchiumi T."/>
            <person name="Sasamoto S."/>
            <person name="Watanabe A."/>
            <person name="Idesawa K."/>
            <person name="Iriguchi M."/>
            <person name="Kawashima K."/>
            <person name="Kohara M."/>
            <person name="Matsumoto M."/>
            <person name="Shimpo S."/>
            <person name="Tsuruoka H."/>
            <person name="Wada T."/>
            <person name="Yamada M."/>
            <person name="Tabata S."/>
        </authorList>
    </citation>
    <scope>NUCLEOTIDE SEQUENCE [LARGE SCALE GENOMIC DNA]</scope>
    <source>
        <strain>JCM 10833 / BCRC 13528 / IAM 13628 / NBRC 14792 / USDA 110</strain>
    </source>
</reference>
<feature type="chain" id="PRO_0000077026" description="Uncharacterized protein blr1755">
    <location>
        <begin position="1"/>
        <end position="106"/>
    </location>
</feature>
<feature type="sequence conflict" description="In Ref. 1; CAA31980." evidence="1" ref="1">
    <original>V</original>
    <variation>L</variation>
    <location>
        <position position="9"/>
    </location>
</feature>
<feature type="sequence conflict" description="In Ref. 1; CAA31980." evidence="1" ref="1">
    <original>G</original>
    <variation>GCRKHVQAIRKGQ</variation>
    <location>
        <position position="106"/>
    </location>
</feature>
<protein>
    <recommendedName>
        <fullName>Uncharacterized protein blr1755</fullName>
    </recommendedName>
</protein>
<sequence length="106" mass="11162">MINLTDSAVNAIKSAISSSERRAGGLRVMIEAGGCNGFKYKMGIADEPKPDDTVIDCDGLKVFVDSKSREHLAGTTIDFVLAPESSGFTFHNPNAATNCSCGKSFG</sequence>
<organism>
    <name type="scientific">Bradyrhizobium diazoefficiens (strain JCM 10833 / BCRC 13528 / IAM 13628 / NBRC 14792 / USDA 110)</name>
    <dbReference type="NCBI Taxonomy" id="224911"/>
    <lineage>
        <taxon>Bacteria</taxon>
        <taxon>Pseudomonadati</taxon>
        <taxon>Pseudomonadota</taxon>
        <taxon>Alphaproteobacteria</taxon>
        <taxon>Hyphomicrobiales</taxon>
        <taxon>Nitrobacteraceae</taxon>
        <taxon>Bradyrhizobium</taxon>
    </lineage>
</organism>
<comment type="similarity">
    <text evidence="1">Belongs to the HesB/IscA family.</text>
</comment>
<name>Y1755_BRADU</name>
<accession>P37029</accession>
<accession>Q9ANM5</accession>
<gene>
    <name type="ordered locus">blr1755</name>
    <name type="ORF">id91</name>
</gene>
<keyword id="KW-1185">Reference proteome</keyword>
<proteinExistence type="inferred from homology"/>